<accession>Q5V1I1</accession>
<keyword id="KW-0460">Magnesium</keyword>
<keyword id="KW-0479">Metal-binding</keyword>
<keyword id="KW-1185">Reference proteome</keyword>
<keyword id="KW-0808">Transferase</keyword>
<dbReference type="EC" id="2.5.1.89" evidence="1"/>
<dbReference type="EMBL" id="AY596297">
    <property type="protein sequence ID" value="AAV46621.1"/>
    <property type="status" value="ALT_INIT"/>
    <property type="molecule type" value="Genomic_DNA"/>
</dbReference>
<dbReference type="SMR" id="Q5V1I1"/>
<dbReference type="STRING" id="272569.rrnAC1716"/>
<dbReference type="PaxDb" id="272569-rrnAC1716"/>
<dbReference type="EnsemblBacteria" id="AAV46621">
    <property type="protein sequence ID" value="AAV46621"/>
    <property type="gene ID" value="rrnAC1716"/>
</dbReference>
<dbReference type="KEGG" id="hma:rrnAC1716"/>
<dbReference type="PATRIC" id="fig|272569.17.peg.2399"/>
<dbReference type="eggNOG" id="arCOG01532">
    <property type="taxonomic scope" value="Archaea"/>
</dbReference>
<dbReference type="HOGENOM" id="CLU_038505_0_6_2"/>
<dbReference type="Proteomes" id="UP000001169">
    <property type="component" value="Chromosome I"/>
</dbReference>
<dbReference type="GO" id="GO:0045547">
    <property type="term" value="F:ditrans,polycis-polyprenyl diphosphate synthase [(2E,6E)-farnesyl diphosphate specific] activity"/>
    <property type="evidence" value="ECO:0007669"/>
    <property type="project" value="TreeGrafter"/>
</dbReference>
<dbReference type="GO" id="GO:0000287">
    <property type="term" value="F:magnesium ion binding"/>
    <property type="evidence" value="ECO:0007669"/>
    <property type="project" value="UniProtKB-UniRule"/>
</dbReference>
<dbReference type="GO" id="GO:0016094">
    <property type="term" value="P:polyprenol biosynthetic process"/>
    <property type="evidence" value="ECO:0007669"/>
    <property type="project" value="TreeGrafter"/>
</dbReference>
<dbReference type="CDD" id="cd00475">
    <property type="entry name" value="Cis_IPPS"/>
    <property type="match status" value="1"/>
</dbReference>
<dbReference type="Gene3D" id="3.40.1180.10">
    <property type="entry name" value="Decaprenyl diphosphate synthase-like"/>
    <property type="match status" value="1"/>
</dbReference>
<dbReference type="HAMAP" id="MF_01139">
    <property type="entry name" value="ISPT"/>
    <property type="match status" value="1"/>
</dbReference>
<dbReference type="InterPro" id="IPR001441">
    <property type="entry name" value="UPP_synth-like"/>
</dbReference>
<dbReference type="InterPro" id="IPR018520">
    <property type="entry name" value="UPP_synth-like_CS"/>
</dbReference>
<dbReference type="InterPro" id="IPR036424">
    <property type="entry name" value="UPP_synth-like_sf"/>
</dbReference>
<dbReference type="NCBIfam" id="TIGR00055">
    <property type="entry name" value="uppS"/>
    <property type="match status" value="1"/>
</dbReference>
<dbReference type="PANTHER" id="PTHR10291:SF43">
    <property type="entry name" value="DEHYDRODOLICHYL DIPHOSPHATE SYNTHASE COMPLEX SUBUNIT DHDDS"/>
    <property type="match status" value="1"/>
</dbReference>
<dbReference type="PANTHER" id="PTHR10291">
    <property type="entry name" value="DEHYDRODOLICHYL DIPHOSPHATE SYNTHASE FAMILY MEMBER"/>
    <property type="match status" value="1"/>
</dbReference>
<dbReference type="Pfam" id="PF01255">
    <property type="entry name" value="Prenyltransf"/>
    <property type="match status" value="1"/>
</dbReference>
<dbReference type="SUPFAM" id="SSF64005">
    <property type="entry name" value="Undecaprenyl diphosphate synthase"/>
    <property type="match status" value="1"/>
</dbReference>
<dbReference type="PROSITE" id="PS01066">
    <property type="entry name" value="UPP_SYNTHASE"/>
    <property type="match status" value="1"/>
</dbReference>
<comment type="function">
    <text evidence="1">Catalyzes the sequential condensation of isopentenyl diphosphate (IPP) with geranylgeranyl diphosphate (GGPP) to yield (2Z,6Z,10Z,14Z,18Z,22Z,26Z,30E,34E,38E)-undecaprenyl diphosphate (tritrans,heptacis-UPP). It is probably the precursor of glycosyl carrier lipids.</text>
</comment>
<comment type="catalytic activity">
    <reaction evidence="1">
        <text>geranylgeranyl diphosphate + 7 isopentenyl diphosphate = tri-trans,hepta-cis-undecaprenyl diphosphate + 7 diphosphate</text>
        <dbReference type="Rhea" id="RHEA:27622"/>
        <dbReference type="ChEBI" id="CHEBI:33019"/>
        <dbReference type="ChEBI" id="CHEBI:57533"/>
        <dbReference type="ChEBI" id="CHEBI:60388"/>
        <dbReference type="ChEBI" id="CHEBI:128769"/>
        <dbReference type="EC" id="2.5.1.89"/>
    </reaction>
</comment>
<comment type="cofactor">
    <cofactor evidence="1">
        <name>Mg(2+)</name>
        <dbReference type="ChEBI" id="CHEBI:18420"/>
    </cofactor>
    <text evidence="1">Binds 2 magnesium ions per subunit.</text>
</comment>
<comment type="subunit">
    <text evidence="1">Homodimer.</text>
</comment>
<comment type="similarity">
    <text evidence="1">Belongs to the UPP synthase family.</text>
</comment>
<comment type="sequence caution" evidence="2">
    <conflict type="erroneous initiation">
        <sequence resource="EMBL-CDS" id="AAV46621"/>
    </conflict>
    <text>Extended N-terminus.</text>
</comment>
<proteinExistence type="inferred from homology"/>
<organism>
    <name type="scientific">Haloarcula marismortui (strain ATCC 43049 / DSM 3752 / JCM 8966 / VKM B-1809)</name>
    <name type="common">Halobacterium marismortui</name>
    <dbReference type="NCBI Taxonomy" id="272569"/>
    <lineage>
        <taxon>Archaea</taxon>
        <taxon>Methanobacteriati</taxon>
        <taxon>Methanobacteriota</taxon>
        <taxon>Stenosarchaea group</taxon>
        <taxon>Halobacteria</taxon>
        <taxon>Halobacteriales</taxon>
        <taxon>Haloarculaceae</taxon>
        <taxon>Haloarcula</taxon>
    </lineage>
</organism>
<reference key="1">
    <citation type="journal article" date="2004" name="Genome Res.">
        <title>Genome sequence of Haloarcula marismortui: a halophilic archaeon from the Dead Sea.</title>
        <authorList>
            <person name="Baliga N.S."/>
            <person name="Bonneau R."/>
            <person name="Facciotti M.T."/>
            <person name="Pan M."/>
            <person name="Glusman G."/>
            <person name="Deutsch E.W."/>
            <person name="Shannon P."/>
            <person name="Chiu Y."/>
            <person name="Weng R.S."/>
            <person name="Gan R.R."/>
            <person name="Hung P."/>
            <person name="Date S.V."/>
            <person name="Marcotte E."/>
            <person name="Hood L."/>
            <person name="Ng W.V."/>
        </authorList>
    </citation>
    <scope>NUCLEOTIDE SEQUENCE [LARGE SCALE GENOMIC DNA]</scope>
    <source>
        <strain>ATCC 43049 / DSM 3752 / JCM 8966 / VKM B-1809</strain>
    </source>
</reference>
<sequence>MLSRGKRLGYAAYERLLQWELSGTPDHVAVIMDGNRRYAEKQGTKKQEGHKEGAQTTEALLNWCDELGIREVTLYTFSTENFDRDPEEREHIFDLVEQKLRTFADADRVHEAGVCIRAIGETEMLPERVRDAIDYAEGRTAQYDQLNLNIALAYGGRAELLGAARDVAAAVENETLDPTDVSAETIEERLYEGPTRDVDLIVRTGGDERTSNFLPWHANGNEAATFFCTPYWPEFRKVDFLRAIRTYQNREDSWRTTRAERSLALVRAIEQSELPTAKRMLGRFRDALPSTEREQLDEEYDLAD</sequence>
<protein>
    <recommendedName>
        <fullName evidence="1">Tritrans,polycis-undecaprenyl-diphosphate synthase (geranylgeranyl-diphosphate specific)</fullName>
        <ecNumber evidence="1">2.5.1.89</ecNumber>
    </recommendedName>
    <alternativeName>
        <fullName evidence="1">Undecaprenyl diphosphate synthase</fullName>
        <shortName evidence="1">UDS</shortName>
    </alternativeName>
    <alternativeName>
        <fullName evidence="1">Undecaprenyl pyrophosphate synthase</fullName>
        <shortName evidence="1">UPP synthase</shortName>
    </alternativeName>
</protein>
<name>UPPS_HALMA</name>
<evidence type="ECO:0000255" key="1">
    <source>
        <dbReference type="HAMAP-Rule" id="MF_01139"/>
    </source>
</evidence>
<evidence type="ECO:0000305" key="2"/>
<feature type="chain" id="PRO_0000123728" description="Tritrans,polycis-undecaprenyl-diphosphate synthase (geranylgeranyl-diphosphate specific)">
    <location>
        <begin position="1"/>
        <end position="304"/>
    </location>
</feature>
<feature type="active site" evidence="1">
    <location>
        <position position="33"/>
    </location>
</feature>
<feature type="active site" description="Proton acceptor" evidence="1">
    <location>
        <position position="81"/>
    </location>
</feature>
<feature type="binding site" evidence="1">
    <location>
        <position position="33"/>
    </location>
    <ligand>
        <name>Mg(2+)</name>
        <dbReference type="ChEBI" id="CHEBI:18420"/>
    </ligand>
</feature>
<feature type="binding site" evidence="1">
    <location>
        <begin position="34"/>
        <end position="37"/>
    </location>
    <ligand>
        <name>substrate</name>
    </ligand>
</feature>
<feature type="binding site" evidence="1">
    <location>
        <position position="46"/>
    </location>
    <ligand>
        <name>substrate</name>
    </ligand>
</feature>
<feature type="binding site" evidence="1">
    <location>
        <position position="50"/>
    </location>
    <ligand>
        <name>substrate</name>
    </ligand>
</feature>
<feature type="binding site" evidence="1">
    <location>
        <begin position="78"/>
        <end position="80"/>
    </location>
    <ligand>
        <name>substrate</name>
    </ligand>
</feature>
<feature type="binding site" evidence="1">
    <location>
        <position position="82"/>
    </location>
    <ligand>
        <name>substrate</name>
    </ligand>
</feature>
<feature type="binding site" evidence="1">
    <location>
        <position position="84"/>
    </location>
    <ligand>
        <name>substrate</name>
    </ligand>
</feature>
<feature type="binding site" evidence="1">
    <location>
        <position position="203"/>
    </location>
    <ligand>
        <name>substrate</name>
    </ligand>
</feature>
<feature type="binding site" evidence="1">
    <location>
        <begin position="209"/>
        <end position="211"/>
    </location>
    <ligand>
        <name>substrate</name>
    </ligand>
</feature>
<gene>
    <name evidence="1" type="primary">uppS</name>
    <name type="ordered locus">rrnAC1716</name>
</gene>